<comment type="function">
    <text evidence="1">Key component of the proton channel; it plays a direct role in the translocation of protons across the membrane.</text>
</comment>
<comment type="subunit">
    <text evidence="1">F-type ATPases have 2 components, CF(1) - the catalytic core - and CF(0) - the membrane proton channel. CF(1) has five subunits: alpha(3), beta(3), gamma(1), delta(1), epsilon(1). CF(0) has four main subunits: a, b, b' and c.</text>
</comment>
<comment type="subcellular location">
    <subcellularLocation>
        <location evidence="1">Plastid</location>
        <location evidence="1">Chloroplast thylakoid membrane</location>
        <topology evidence="1">Multi-pass membrane protein</topology>
    </subcellularLocation>
</comment>
<comment type="similarity">
    <text evidence="1">Belongs to the ATPase A chain family.</text>
</comment>
<geneLocation type="chloroplast"/>
<gene>
    <name evidence="1" type="primary">atpI</name>
</gene>
<feature type="chain" id="PRO_0000362579" description="ATP synthase subunit a, chloroplastic">
    <location>
        <begin position="1"/>
        <end position="252"/>
    </location>
</feature>
<feature type="transmembrane region" description="Helical" evidence="1">
    <location>
        <begin position="41"/>
        <end position="61"/>
    </location>
</feature>
<feature type="transmembrane region" description="Helical" evidence="1">
    <location>
        <begin position="100"/>
        <end position="120"/>
    </location>
</feature>
<feature type="transmembrane region" description="Helical" evidence="1">
    <location>
        <begin position="138"/>
        <end position="158"/>
    </location>
</feature>
<feature type="transmembrane region" description="Helical" evidence="1">
    <location>
        <begin position="204"/>
        <end position="224"/>
    </location>
</feature>
<feature type="transmembrane region" description="Helical" evidence="1">
    <location>
        <begin position="225"/>
        <end position="245"/>
    </location>
</feature>
<evidence type="ECO:0000255" key="1">
    <source>
        <dbReference type="HAMAP-Rule" id="MF_01393"/>
    </source>
</evidence>
<sequence length="252" mass="28013">MIEHIFIFNNSTSLSNPVFDISEVAVGQHLYWQIGDYQLHGQVLITSWIVLGGVIIFTLLANSDLKPLPVGLQNFTELVTEFIRDLAKTQIGEEEYLKWVPFLGTIFIFVFVSNWAGALLPWRLIELPNGELAAPTNDINTTVSLALLTSVSYFYAGIRKKGLGYFKRYIQPVVFLLPLNVLEDFSKPLSLSFRLFGNILADELIVGVLVALVPLFVPIPLMLLGVFTSAIQALVFATLAGAYIGESIEDHH</sequence>
<accession>B2X1U8</accession>
<protein>
    <recommendedName>
        <fullName evidence="1">ATP synthase subunit a, chloroplastic</fullName>
    </recommendedName>
    <alternativeName>
        <fullName evidence="1">ATP synthase F0 sector subunit a</fullName>
    </alternativeName>
    <alternativeName>
        <fullName evidence="1">F-ATPase subunit IV</fullName>
    </alternativeName>
</protein>
<proteinExistence type="inferred from homology"/>
<reference key="1">
    <citation type="journal article" date="2008" name="J. Phycol.">
        <title>Deep division in the Chlorophyceae (Chlorophyta) revealed by chloroplast phylogenomic analyseS.</title>
        <authorList>
            <person name="Turmel M."/>
            <person name="Brouard J.-S."/>
            <person name="Gagnon C."/>
            <person name="Otis C."/>
            <person name="Lemieux C."/>
        </authorList>
        <dbReference type="AGRICOLA" id="IND44059346"/>
    </citation>
    <scope>NUCLEOTIDE SEQUENCE [GENOMIC DNA]</scope>
    <source>
        <strain>SAG 575-1b / CCAP 575/1B / UTEX LB 40</strain>
    </source>
</reference>
<reference key="2">
    <citation type="journal article" date="2008" name="BMC Genomics">
        <title>Chloroplast DNA sequence of the green alga Oedogonium cardiacum (Chlorophyceae): unique genome architecture, derived characters shared with the Chaetophorales and novel genes acquired through horizontal transfer.</title>
        <authorList>
            <person name="Brouard J.-S."/>
            <person name="Otis C."/>
            <person name="Lemieux C."/>
            <person name="Turmel M."/>
        </authorList>
    </citation>
    <scope>NUCLEOTIDE SEQUENCE [LARGE SCALE GENOMIC DNA]</scope>
    <source>
        <strain>SAG 575-1b / CCAP 575/1B / UTEX LB 40</strain>
    </source>
</reference>
<keyword id="KW-0066">ATP synthesis</keyword>
<keyword id="KW-0138">CF(0)</keyword>
<keyword id="KW-0150">Chloroplast</keyword>
<keyword id="KW-0375">Hydrogen ion transport</keyword>
<keyword id="KW-0406">Ion transport</keyword>
<keyword id="KW-0472">Membrane</keyword>
<keyword id="KW-0934">Plastid</keyword>
<keyword id="KW-0793">Thylakoid</keyword>
<keyword id="KW-0812">Transmembrane</keyword>
<keyword id="KW-1133">Transmembrane helix</keyword>
<keyword id="KW-0813">Transport</keyword>
<dbReference type="EMBL" id="EF587323">
    <property type="protein sequence ID" value="ABU88161.1"/>
    <property type="molecule type" value="Genomic_DNA"/>
</dbReference>
<dbReference type="EMBL" id="EU677193">
    <property type="protein sequence ID" value="ACC97210.1"/>
    <property type="molecule type" value="Genomic_DNA"/>
</dbReference>
<dbReference type="RefSeq" id="YP_002000382.1">
    <property type="nucleotide sequence ID" value="NC_011031.1"/>
</dbReference>
<dbReference type="SMR" id="B2X1U8"/>
<dbReference type="GeneID" id="6440154"/>
<dbReference type="GO" id="GO:0009535">
    <property type="term" value="C:chloroplast thylakoid membrane"/>
    <property type="evidence" value="ECO:0007669"/>
    <property type="project" value="UniProtKB-SubCell"/>
</dbReference>
<dbReference type="GO" id="GO:0005886">
    <property type="term" value="C:plasma membrane"/>
    <property type="evidence" value="ECO:0007669"/>
    <property type="project" value="UniProtKB-UniRule"/>
</dbReference>
<dbReference type="GO" id="GO:0045259">
    <property type="term" value="C:proton-transporting ATP synthase complex"/>
    <property type="evidence" value="ECO:0007669"/>
    <property type="project" value="UniProtKB-KW"/>
</dbReference>
<dbReference type="GO" id="GO:0046933">
    <property type="term" value="F:proton-transporting ATP synthase activity, rotational mechanism"/>
    <property type="evidence" value="ECO:0007669"/>
    <property type="project" value="UniProtKB-UniRule"/>
</dbReference>
<dbReference type="CDD" id="cd00310">
    <property type="entry name" value="ATP-synt_Fo_a_6"/>
    <property type="match status" value="1"/>
</dbReference>
<dbReference type="FunFam" id="1.20.120.220:FF:000001">
    <property type="entry name" value="ATP synthase subunit a, chloroplastic"/>
    <property type="match status" value="1"/>
</dbReference>
<dbReference type="Gene3D" id="1.20.120.220">
    <property type="entry name" value="ATP synthase, F0 complex, subunit A"/>
    <property type="match status" value="1"/>
</dbReference>
<dbReference type="HAMAP" id="MF_01393">
    <property type="entry name" value="ATP_synth_a_bact"/>
    <property type="match status" value="1"/>
</dbReference>
<dbReference type="InterPro" id="IPR045082">
    <property type="entry name" value="ATP_syn_F0_a_bact/chloroplast"/>
</dbReference>
<dbReference type="InterPro" id="IPR000568">
    <property type="entry name" value="ATP_synth_F0_asu"/>
</dbReference>
<dbReference type="InterPro" id="IPR023011">
    <property type="entry name" value="ATP_synth_F0_asu_AS"/>
</dbReference>
<dbReference type="InterPro" id="IPR035908">
    <property type="entry name" value="F0_ATP_A_sf"/>
</dbReference>
<dbReference type="NCBIfam" id="TIGR01131">
    <property type="entry name" value="ATP_synt_6_or_A"/>
    <property type="match status" value="1"/>
</dbReference>
<dbReference type="PANTHER" id="PTHR42823">
    <property type="entry name" value="ATP SYNTHASE SUBUNIT A, CHLOROPLASTIC"/>
    <property type="match status" value="1"/>
</dbReference>
<dbReference type="PANTHER" id="PTHR42823:SF3">
    <property type="entry name" value="ATP SYNTHASE SUBUNIT A, CHLOROPLASTIC"/>
    <property type="match status" value="1"/>
</dbReference>
<dbReference type="Pfam" id="PF00119">
    <property type="entry name" value="ATP-synt_A"/>
    <property type="match status" value="1"/>
</dbReference>
<dbReference type="PRINTS" id="PR00123">
    <property type="entry name" value="ATPASEA"/>
</dbReference>
<dbReference type="SUPFAM" id="SSF81336">
    <property type="entry name" value="F1F0 ATP synthase subunit A"/>
    <property type="match status" value="1"/>
</dbReference>
<dbReference type="PROSITE" id="PS00449">
    <property type="entry name" value="ATPASE_A"/>
    <property type="match status" value="1"/>
</dbReference>
<name>ATPI_OEDCA</name>
<organism>
    <name type="scientific">Oedogonium cardiacum</name>
    <name type="common">Filamentous green alga</name>
    <dbReference type="NCBI Taxonomy" id="55995"/>
    <lineage>
        <taxon>Eukaryota</taxon>
        <taxon>Viridiplantae</taxon>
        <taxon>Chlorophyta</taxon>
        <taxon>core chlorophytes</taxon>
        <taxon>Chlorophyceae</taxon>
        <taxon>OCC clade</taxon>
        <taxon>Oedogoniales</taxon>
        <taxon>Oedogoniaceae</taxon>
        <taxon>Oedogonium</taxon>
    </lineage>
</organism>